<dbReference type="SMR" id="P01677"/>
<dbReference type="FunCoup" id="P01677">
    <property type="interactions" value="578"/>
</dbReference>
<dbReference type="InParanoid" id="P01677"/>
<dbReference type="Proteomes" id="UP000000589">
    <property type="component" value="Unplaced"/>
</dbReference>
<dbReference type="RNAct" id="P01677">
    <property type="molecule type" value="protein"/>
</dbReference>
<dbReference type="GO" id="GO:0019814">
    <property type="term" value="C:immunoglobulin complex"/>
    <property type="evidence" value="ECO:0000318"/>
    <property type="project" value="GO_Central"/>
</dbReference>
<dbReference type="GO" id="GO:0002250">
    <property type="term" value="P:adaptive immune response"/>
    <property type="evidence" value="ECO:0007669"/>
    <property type="project" value="UniProtKB-KW"/>
</dbReference>
<dbReference type="GO" id="GO:0006955">
    <property type="term" value="P:immune response"/>
    <property type="evidence" value="ECO:0000318"/>
    <property type="project" value="GO_Central"/>
</dbReference>
<dbReference type="FunFam" id="2.60.40.10:FF:001317">
    <property type="entry name" value="Immunoglobulin kappa chain variable 4-54"/>
    <property type="match status" value="1"/>
</dbReference>
<dbReference type="Gene3D" id="2.60.40.10">
    <property type="entry name" value="Immunoglobulins"/>
    <property type="match status" value="1"/>
</dbReference>
<dbReference type="InterPro" id="IPR007110">
    <property type="entry name" value="Ig-like_dom"/>
</dbReference>
<dbReference type="InterPro" id="IPR036179">
    <property type="entry name" value="Ig-like_dom_sf"/>
</dbReference>
<dbReference type="InterPro" id="IPR013783">
    <property type="entry name" value="Ig-like_fold"/>
</dbReference>
<dbReference type="InterPro" id="IPR003599">
    <property type="entry name" value="Ig_sub"/>
</dbReference>
<dbReference type="InterPro" id="IPR013106">
    <property type="entry name" value="Ig_V-set"/>
</dbReference>
<dbReference type="InterPro" id="IPR050150">
    <property type="entry name" value="IgV_Light_Chain"/>
</dbReference>
<dbReference type="PANTHER" id="PTHR23267">
    <property type="entry name" value="IMMUNOGLOBULIN LIGHT CHAIN"/>
    <property type="match status" value="1"/>
</dbReference>
<dbReference type="Pfam" id="PF07686">
    <property type="entry name" value="V-set"/>
    <property type="match status" value="1"/>
</dbReference>
<dbReference type="SMART" id="SM00409">
    <property type="entry name" value="IG"/>
    <property type="match status" value="1"/>
</dbReference>
<dbReference type="SMART" id="SM00406">
    <property type="entry name" value="IGv"/>
    <property type="match status" value="1"/>
</dbReference>
<dbReference type="SUPFAM" id="SSF48726">
    <property type="entry name" value="Immunoglobulin"/>
    <property type="match status" value="1"/>
</dbReference>
<dbReference type="PROSITE" id="PS50835">
    <property type="entry name" value="IG_LIKE"/>
    <property type="match status" value="1"/>
</dbReference>
<evidence type="ECO:0000255" key="1">
    <source>
        <dbReference type="PROSITE-ProRule" id="PRU00114"/>
    </source>
</evidence>
<comment type="miscellaneous">
    <text>The two sequences are identical.</text>
</comment>
<comment type="miscellaneous">
    <text>These chains were isolated from myeloma proteins that bind galactan.</text>
</comment>
<organism>
    <name type="scientific">Mus musculus</name>
    <name type="common">Mouse</name>
    <dbReference type="NCBI Taxonomy" id="10090"/>
    <lineage>
        <taxon>Eukaryota</taxon>
        <taxon>Metazoa</taxon>
        <taxon>Chordata</taxon>
        <taxon>Craniata</taxon>
        <taxon>Vertebrata</taxon>
        <taxon>Euteleostomi</taxon>
        <taxon>Mammalia</taxon>
        <taxon>Eutheria</taxon>
        <taxon>Euarchontoglires</taxon>
        <taxon>Glires</taxon>
        <taxon>Rodentia</taxon>
        <taxon>Myomorpha</taxon>
        <taxon>Muroidea</taxon>
        <taxon>Muridae</taxon>
        <taxon>Murinae</taxon>
        <taxon>Mus</taxon>
        <taxon>Mus</taxon>
    </lineage>
</organism>
<protein>
    <recommendedName>
        <fullName>Ig kappa chain V-VI region TEPC 601/TEPC 191</fullName>
    </recommendedName>
</protein>
<accession>P01677</accession>
<name>KV6A3_MOUSE</name>
<sequence length="107" mass="11568">EIVLTQSPAITAASLGQKVTITCSASSSVSYMHWYQQKSGTSPKPWIYEISKLASGVPARFSGSGSGTSYSLTISSMEAEDAAIYYCQQWNYPLITFGAGTKLELKR</sequence>
<keyword id="KW-1064">Adaptive immunity</keyword>
<keyword id="KW-0903">Direct protein sequencing</keyword>
<keyword id="KW-1015">Disulfide bond</keyword>
<keyword id="KW-0391">Immunity</keyword>
<keyword id="KW-1280">Immunoglobulin</keyword>
<keyword id="KW-1185">Reference proteome</keyword>
<feature type="chain" id="PRO_0000059812" description="Ig kappa chain V-VI region TEPC 601/TEPC 191">
    <location>
        <begin position="1"/>
        <end position="107" status="greater than"/>
    </location>
</feature>
<feature type="region of interest" description="Framework-1">
    <location>
        <begin position="1"/>
        <end position="23"/>
    </location>
</feature>
<feature type="region of interest" description="Complementarity-determining-1">
    <location>
        <begin position="24"/>
        <end position="33"/>
    </location>
</feature>
<feature type="region of interest" description="Framework-2">
    <location>
        <begin position="34"/>
        <end position="48"/>
    </location>
</feature>
<feature type="region of interest" description="Complementarity-determining-2">
    <location>
        <begin position="49"/>
        <end position="55"/>
    </location>
</feature>
<feature type="region of interest" description="Framework-3">
    <location>
        <begin position="56"/>
        <end position="87"/>
    </location>
</feature>
<feature type="region of interest" description="Complementarity-determining-3">
    <location>
        <begin position="88"/>
        <end position="96"/>
    </location>
</feature>
<feature type="region of interest" description="Framework-4">
    <location>
        <begin position="97"/>
        <end position="106"/>
    </location>
</feature>
<feature type="disulfide bond" evidence="1">
    <location>
        <begin position="23"/>
        <end position="87"/>
    </location>
</feature>
<feature type="non-terminal residue">
    <location>
        <position position="107"/>
    </location>
</feature>
<proteinExistence type="evidence at protein level"/>
<reference key="1">
    <citation type="journal article" date="1978" name="Biochemistry">
        <title>Kappa chain variable regions from three galactan binding myeloma proteins.</title>
        <authorList>
            <person name="Rao D.N."/>
            <person name="Rudikoff S."/>
            <person name="Potter M."/>
        </authorList>
    </citation>
    <scope>PROTEIN SEQUENCE (TEPC 601)</scope>
</reference>
<reference key="2">
    <citation type="journal article" date="1980" name="Proc. Natl. Acad. Sci. U.S.A.">
        <title>Kappa chain joining segments and structural diversity of antibody combining sites.</title>
        <authorList>
            <person name="Rudikoff S."/>
            <person name="Rao D.N."/>
            <person name="Glaudemans C.P.J."/>
            <person name="Potter M."/>
        </authorList>
    </citation>
    <scope>PROTEIN SEQUENCE (TEPC 191)</scope>
</reference>